<gene>
    <name type="primary">sconC</name>
    <name type="synonym">skpA</name>
    <name type="ORF">NFIA_037050</name>
</gene>
<name>SKP1_NEOFI</name>
<keyword id="KW-1185">Reference proteome</keyword>
<keyword id="KW-0833">Ubl conjugation pathway</keyword>
<feature type="chain" id="PRO_0000397268" description="E3 ubiquitin ligase complex SCF subunit sconC">
    <location>
        <begin position="1"/>
        <end position="158"/>
    </location>
</feature>
<feature type="region of interest" description="Interaction with the F-box domain of F-box proteins" evidence="1">
    <location>
        <begin position="100"/>
        <end position="158"/>
    </location>
</feature>
<organism>
    <name type="scientific">Neosartorya fischeri (strain ATCC 1020 / DSM 3700 / CBS 544.65 / FGSC A1164 / JCM 1740 / NRRL 181 / WB 181)</name>
    <name type="common">Aspergillus fischerianus</name>
    <dbReference type="NCBI Taxonomy" id="331117"/>
    <lineage>
        <taxon>Eukaryota</taxon>
        <taxon>Fungi</taxon>
        <taxon>Dikarya</taxon>
        <taxon>Ascomycota</taxon>
        <taxon>Pezizomycotina</taxon>
        <taxon>Eurotiomycetes</taxon>
        <taxon>Eurotiomycetidae</taxon>
        <taxon>Eurotiales</taxon>
        <taxon>Aspergillaceae</taxon>
        <taxon>Aspergillus</taxon>
        <taxon>Aspergillus subgen. Fumigati</taxon>
    </lineage>
</organism>
<evidence type="ECO:0000250" key="1"/>
<evidence type="ECO:0000305" key="2"/>
<sequence length="158" mass="18141">MTTVTLTSSDGVDITVDRDVAERSILIKNMLEDLGESDEAIPIPNVNEVVLKKVIEWCTHHKNDPPSTGDDDDSRRKTTDIDEWDQKFMQVDQEMLFEIILAANYLDIKALLDVGCKTVANMIKGKSPEEIRKTFNIQNDFTPEEEDQIRRENEWAEE</sequence>
<dbReference type="EMBL" id="DS027686">
    <property type="protein sequence ID" value="EAW24133.1"/>
    <property type="molecule type" value="Genomic_DNA"/>
</dbReference>
<dbReference type="RefSeq" id="XP_001266030.1">
    <property type="nucleotide sequence ID" value="XM_001266029.1"/>
</dbReference>
<dbReference type="SMR" id="A1CZG3"/>
<dbReference type="STRING" id="331117.A1CZG3"/>
<dbReference type="EnsemblFungi" id="EAW24133">
    <property type="protein sequence ID" value="EAW24133"/>
    <property type="gene ID" value="NFIA_037050"/>
</dbReference>
<dbReference type="GeneID" id="4592491"/>
<dbReference type="KEGG" id="nfi:NFIA_037050"/>
<dbReference type="VEuPathDB" id="FungiDB:NFIA_037050"/>
<dbReference type="eggNOG" id="KOG1724">
    <property type="taxonomic scope" value="Eukaryota"/>
</dbReference>
<dbReference type="HOGENOM" id="CLU_059252_4_0_1"/>
<dbReference type="OMA" id="DKYTASM"/>
<dbReference type="OrthoDB" id="2342932at2759"/>
<dbReference type="UniPathway" id="UPA00143"/>
<dbReference type="Proteomes" id="UP000006702">
    <property type="component" value="Unassembled WGS sequence"/>
</dbReference>
<dbReference type="GO" id="GO:0031518">
    <property type="term" value="C:CBF3 complex"/>
    <property type="evidence" value="ECO:0007669"/>
    <property type="project" value="EnsemblFungi"/>
</dbReference>
<dbReference type="GO" id="GO:0000776">
    <property type="term" value="C:kinetochore"/>
    <property type="evidence" value="ECO:0007669"/>
    <property type="project" value="EnsemblFungi"/>
</dbReference>
<dbReference type="GO" id="GO:0043224">
    <property type="term" value="C:nuclear SCF ubiquitin ligase complex"/>
    <property type="evidence" value="ECO:0007669"/>
    <property type="project" value="EnsemblFungi"/>
</dbReference>
<dbReference type="GO" id="GO:0043291">
    <property type="term" value="C:RAVE complex"/>
    <property type="evidence" value="ECO:0007669"/>
    <property type="project" value="EnsemblFungi"/>
</dbReference>
<dbReference type="GO" id="GO:0017117">
    <property type="term" value="C:single-stranded DNA-dependent ATP-dependent DNA helicase complex"/>
    <property type="evidence" value="ECO:0007669"/>
    <property type="project" value="EnsemblFungi"/>
</dbReference>
<dbReference type="GO" id="GO:0003688">
    <property type="term" value="F:DNA replication origin binding"/>
    <property type="evidence" value="ECO:0007669"/>
    <property type="project" value="EnsemblFungi"/>
</dbReference>
<dbReference type="GO" id="GO:0061630">
    <property type="term" value="F:ubiquitin protein ligase activity"/>
    <property type="evidence" value="ECO:0007669"/>
    <property type="project" value="EnsemblFungi"/>
</dbReference>
<dbReference type="GO" id="GO:0010458">
    <property type="term" value="P:exit from mitosis"/>
    <property type="evidence" value="ECO:0007669"/>
    <property type="project" value="EnsemblFungi"/>
</dbReference>
<dbReference type="GO" id="GO:0000082">
    <property type="term" value="P:G1/S transition of mitotic cell cycle"/>
    <property type="evidence" value="ECO:0007669"/>
    <property type="project" value="EnsemblFungi"/>
</dbReference>
<dbReference type="GO" id="GO:0000086">
    <property type="term" value="P:G2/M transition of mitotic cell cycle"/>
    <property type="evidence" value="ECO:0007669"/>
    <property type="project" value="EnsemblFungi"/>
</dbReference>
<dbReference type="GO" id="GO:0051382">
    <property type="term" value="P:kinetochore assembly"/>
    <property type="evidence" value="ECO:0007669"/>
    <property type="project" value="EnsemblFungi"/>
</dbReference>
<dbReference type="GO" id="GO:0101026">
    <property type="term" value="P:mitotic nuclear membrane biogenesis"/>
    <property type="evidence" value="ECO:0007669"/>
    <property type="project" value="EnsemblFungi"/>
</dbReference>
<dbReference type="GO" id="GO:2000766">
    <property type="term" value="P:negative regulation of cytoplasmic translation"/>
    <property type="evidence" value="ECO:0007669"/>
    <property type="project" value="EnsemblFungi"/>
</dbReference>
<dbReference type="GO" id="GO:0045841">
    <property type="term" value="P:negative regulation of mitotic metaphase/anaphase transition"/>
    <property type="evidence" value="ECO:0007669"/>
    <property type="project" value="EnsemblFungi"/>
</dbReference>
<dbReference type="GO" id="GO:0010828">
    <property type="term" value="P:positive regulation of D-glucose transmembrane transport"/>
    <property type="evidence" value="ECO:0007669"/>
    <property type="project" value="EnsemblFungi"/>
</dbReference>
<dbReference type="GO" id="GO:0045116">
    <property type="term" value="P:protein neddylation"/>
    <property type="evidence" value="ECO:0007669"/>
    <property type="project" value="EnsemblFungi"/>
</dbReference>
<dbReference type="GO" id="GO:0016567">
    <property type="term" value="P:protein ubiquitination"/>
    <property type="evidence" value="ECO:0007669"/>
    <property type="project" value="UniProtKB-UniPathway"/>
</dbReference>
<dbReference type="GO" id="GO:0000018">
    <property type="term" value="P:regulation of DNA recombination"/>
    <property type="evidence" value="ECO:0007669"/>
    <property type="project" value="EnsemblFungi"/>
</dbReference>
<dbReference type="GO" id="GO:0007096">
    <property type="term" value="P:regulation of exit from mitosis"/>
    <property type="evidence" value="ECO:0007669"/>
    <property type="project" value="EnsemblFungi"/>
</dbReference>
<dbReference type="GO" id="GO:0043254">
    <property type="term" value="P:regulation of protein-containing complex assembly"/>
    <property type="evidence" value="ECO:0007669"/>
    <property type="project" value="EnsemblFungi"/>
</dbReference>
<dbReference type="GO" id="GO:0000712">
    <property type="term" value="P:resolution of meiotic recombination intermediates"/>
    <property type="evidence" value="ECO:0007669"/>
    <property type="project" value="EnsemblFungi"/>
</dbReference>
<dbReference type="GO" id="GO:0031146">
    <property type="term" value="P:SCF-dependent proteasomal ubiquitin-dependent protein catabolic process"/>
    <property type="evidence" value="ECO:0007669"/>
    <property type="project" value="EnsemblFungi"/>
</dbReference>
<dbReference type="GO" id="GO:0000921">
    <property type="term" value="P:septin ring assembly"/>
    <property type="evidence" value="ECO:0007669"/>
    <property type="project" value="EnsemblFungi"/>
</dbReference>
<dbReference type="GO" id="GO:0030466">
    <property type="term" value="P:silent mating-type cassette heterochromatin formation"/>
    <property type="evidence" value="ECO:0007669"/>
    <property type="project" value="EnsemblFungi"/>
</dbReference>
<dbReference type="GO" id="GO:0007035">
    <property type="term" value="P:vacuolar acidification"/>
    <property type="evidence" value="ECO:0007669"/>
    <property type="project" value="EnsemblFungi"/>
</dbReference>
<dbReference type="GO" id="GO:0070072">
    <property type="term" value="P:vacuolar proton-transporting V-type ATPase complex assembly"/>
    <property type="evidence" value="ECO:0007669"/>
    <property type="project" value="EnsemblFungi"/>
</dbReference>
<dbReference type="CDD" id="cd18322">
    <property type="entry name" value="BTB_POZ_SKP1"/>
    <property type="match status" value="1"/>
</dbReference>
<dbReference type="FunFam" id="3.30.710.10:FF:000026">
    <property type="entry name" value="E3 ubiquitin ligase complex SCF subunit"/>
    <property type="match status" value="1"/>
</dbReference>
<dbReference type="Gene3D" id="3.30.710.10">
    <property type="entry name" value="Potassium Channel Kv1.1, Chain A"/>
    <property type="match status" value="1"/>
</dbReference>
<dbReference type="InterPro" id="IPR016897">
    <property type="entry name" value="SKP1"/>
</dbReference>
<dbReference type="InterPro" id="IPR001232">
    <property type="entry name" value="SKP1-like"/>
</dbReference>
<dbReference type="InterPro" id="IPR036296">
    <property type="entry name" value="SKP1-like_dim_sf"/>
</dbReference>
<dbReference type="InterPro" id="IPR011333">
    <property type="entry name" value="SKP1/BTB/POZ_sf"/>
</dbReference>
<dbReference type="InterPro" id="IPR016072">
    <property type="entry name" value="Skp1_comp_dimer"/>
</dbReference>
<dbReference type="InterPro" id="IPR016073">
    <property type="entry name" value="Skp1_comp_POZ"/>
</dbReference>
<dbReference type="PANTHER" id="PTHR11165">
    <property type="entry name" value="SKP1"/>
    <property type="match status" value="1"/>
</dbReference>
<dbReference type="Pfam" id="PF01466">
    <property type="entry name" value="Skp1"/>
    <property type="match status" value="1"/>
</dbReference>
<dbReference type="Pfam" id="PF03931">
    <property type="entry name" value="Skp1_POZ"/>
    <property type="match status" value="1"/>
</dbReference>
<dbReference type="PIRSF" id="PIRSF028729">
    <property type="entry name" value="E3_ubiquit_lig_SCF_Skp"/>
    <property type="match status" value="1"/>
</dbReference>
<dbReference type="SMART" id="SM00512">
    <property type="entry name" value="Skp1"/>
    <property type="match status" value="1"/>
</dbReference>
<dbReference type="SUPFAM" id="SSF54695">
    <property type="entry name" value="POZ domain"/>
    <property type="match status" value="1"/>
</dbReference>
<dbReference type="SUPFAM" id="SSF81382">
    <property type="entry name" value="Skp1 dimerisation domain-like"/>
    <property type="match status" value="1"/>
</dbReference>
<reference key="1">
    <citation type="journal article" date="2008" name="PLoS Genet.">
        <title>Genomic islands in the pathogenic filamentous fungus Aspergillus fumigatus.</title>
        <authorList>
            <person name="Fedorova N.D."/>
            <person name="Khaldi N."/>
            <person name="Joardar V.S."/>
            <person name="Maiti R."/>
            <person name="Amedeo P."/>
            <person name="Anderson M.J."/>
            <person name="Crabtree J."/>
            <person name="Silva J.C."/>
            <person name="Badger J.H."/>
            <person name="Albarraq A."/>
            <person name="Angiuoli S."/>
            <person name="Bussey H."/>
            <person name="Bowyer P."/>
            <person name="Cotty P.J."/>
            <person name="Dyer P.S."/>
            <person name="Egan A."/>
            <person name="Galens K."/>
            <person name="Fraser-Liggett C.M."/>
            <person name="Haas B.J."/>
            <person name="Inman J.M."/>
            <person name="Kent R."/>
            <person name="Lemieux S."/>
            <person name="Malavazi I."/>
            <person name="Orvis J."/>
            <person name="Roemer T."/>
            <person name="Ronning C.M."/>
            <person name="Sundaram J.P."/>
            <person name="Sutton G."/>
            <person name="Turner G."/>
            <person name="Venter J.C."/>
            <person name="White O.R."/>
            <person name="Whitty B.R."/>
            <person name="Youngman P."/>
            <person name="Wolfe K.H."/>
            <person name="Goldman G.H."/>
            <person name="Wortman J.R."/>
            <person name="Jiang B."/>
            <person name="Denning D.W."/>
            <person name="Nierman W.C."/>
        </authorList>
    </citation>
    <scope>NUCLEOTIDE SEQUENCE [LARGE SCALE GENOMIC DNA]</scope>
    <source>
        <strain>ATCC 1020 / DSM 3700 / CBS 544.65 / FGSC A1164 / JCM 1740 / NRRL 181 / WB 181</strain>
    </source>
</reference>
<protein>
    <recommendedName>
        <fullName>E3 ubiquitin ligase complex SCF subunit sconC</fullName>
    </recommendedName>
    <alternativeName>
        <fullName>Sulfur controller C</fullName>
    </alternativeName>
    <alternativeName>
        <fullName>Sulfur metabolite repression control protein C</fullName>
    </alternativeName>
</protein>
<proteinExistence type="inferred from homology"/>
<comment type="function">
    <text evidence="1">Essential component of the SCF (SKP1-CUL1-F-box protein) E3 ubiquitin ligase complexes, which mediate the ubiquitination and subsequent proteasomal degradation of target proteins. Controls sulfur metabolite repression, probably by mediating the inactivation or degradation of the metR transcription factor (By similarity).</text>
</comment>
<comment type="pathway">
    <text>Protein modification; protein ubiquitination.</text>
</comment>
<comment type="subunit">
    <text evidence="1">Component of the SCF (SKP1-CUL1-F-box protein) E3 ubiquitin ligase complexes.</text>
</comment>
<comment type="similarity">
    <text evidence="2">Belongs to the SKP1 family.</text>
</comment>
<accession>A1CZG3</accession>